<organism>
    <name type="scientific">Aeromonas salmonicida (strain A449)</name>
    <dbReference type="NCBI Taxonomy" id="382245"/>
    <lineage>
        <taxon>Bacteria</taxon>
        <taxon>Pseudomonadati</taxon>
        <taxon>Pseudomonadota</taxon>
        <taxon>Gammaproteobacteria</taxon>
        <taxon>Aeromonadales</taxon>
        <taxon>Aeromonadaceae</taxon>
        <taxon>Aeromonas</taxon>
    </lineage>
</organism>
<accession>A4SJ51</accession>
<name>DCUP_AERS4</name>
<dbReference type="EC" id="4.1.1.37" evidence="1"/>
<dbReference type="EMBL" id="CP000644">
    <property type="protein sequence ID" value="ABO88923.1"/>
    <property type="molecule type" value="Genomic_DNA"/>
</dbReference>
<dbReference type="RefSeq" id="WP_005313219.1">
    <property type="nucleotide sequence ID" value="NC_009348.1"/>
</dbReference>
<dbReference type="SMR" id="A4SJ51"/>
<dbReference type="STRING" id="29491.GCA_000820065_01718"/>
<dbReference type="GeneID" id="79878319"/>
<dbReference type="KEGG" id="asa:ASA_0769"/>
<dbReference type="eggNOG" id="COG0407">
    <property type="taxonomic scope" value="Bacteria"/>
</dbReference>
<dbReference type="HOGENOM" id="CLU_040933_0_0_6"/>
<dbReference type="UniPathway" id="UPA00251">
    <property type="reaction ID" value="UER00321"/>
</dbReference>
<dbReference type="Proteomes" id="UP000000225">
    <property type="component" value="Chromosome"/>
</dbReference>
<dbReference type="GO" id="GO:0005829">
    <property type="term" value="C:cytosol"/>
    <property type="evidence" value="ECO:0007669"/>
    <property type="project" value="TreeGrafter"/>
</dbReference>
<dbReference type="GO" id="GO:0004853">
    <property type="term" value="F:uroporphyrinogen decarboxylase activity"/>
    <property type="evidence" value="ECO:0007669"/>
    <property type="project" value="UniProtKB-UniRule"/>
</dbReference>
<dbReference type="GO" id="GO:0019353">
    <property type="term" value="P:protoporphyrinogen IX biosynthetic process from glutamate"/>
    <property type="evidence" value="ECO:0007669"/>
    <property type="project" value="TreeGrafter"/>
</dbReference>
<dbReference type="CDD" id="cd00717">
    <property type="entry name" value="URO-D"/>
    <property type="match status" value="1"/>
</dbReference>
<dbReference type="FunFam" id="3.20.20.210:FF:000001">
    <property type="entry name" value="Uroporphyrinogen decarboxylase"/>
    <property type="match status" value="1"/>
</dbReference>
<dbReference type="Gene3D" id="3.20.20.210">
    <property type="match status" value="1"/>
</dbReference>
<dbReference type="HAMAP" id="MF_00218">
    <property type="entry name" value="URO_D"/>
    <property type="match status" value="1"/>
</dbReference>
<dbReference type="InterPro" id="IPR038071">
    <property type="entry name" value="UROD/MetE-like_sf"/>
</dbReference>
<dbReference type="InterPro" id="IPR006361">
    <property type="entry name" value="Uroporphyrinogen_deCO2ase_HemE"/>
</dbReference>
<dbReference type="InterPro" id="IPR000257">
    <property type="entry name" value="Uroporphyrinogen_deCOase"/>
</dbReference>
<dbReference type="NCBIfam" id="TIGR01464">
    <property type="entry name" value="hemE"/>
    <property type="match status" value="1"/>
</dbReference>
<dbReference type="PANTHER" id="PTHR21091">
    <property type="entry name" value="METHYLTETRAHYDROFOLATE:HOMOCYSTEINE METHYLTRANSFERASE RELATED"/>
    <property type="match status" value="1"/>
</dbReference>
<dbReference type="PANTHER" id="PTHR21091:SF169">
    <property type="entry name" value="UROPORPHYRINOGEN DECARBOXYLASE"/>
    <property type="match status" value="1"/>
</dbReference>
<dbReference type="Pfam" id="PF01208">
    <property type="entry name" value="URO-D"/>
    <property type="match status" value="1"/>
</dbReference>
<dbReference type="SUPFAM" id="SSF51726">
    <property type="entry name" value="UROD/MetE-like"/>
    <property type="match status" value="1"/>
</dbReference>
<dbReference type="PROSITE" id="PS00906">
    <property type="entry name" value="UROD_1"/>
    <property type="match status" value="1"/>
</dbReference>
<dbReference type="PROSITE" id="PS00907">
    <property type="entry name" value="UROD_2"/>
    <property type="match status" value="1"/>
</dbReference>
<sequence>MKELKNDRYLRALLRQDVDMTPVWMMRQAGRYLPEYKATRAVAGDFMSLCRNAELACEVTLQPLRRYPLDAAILFSDILTVPDAMGLGLYFEQGEGPRFERPIKSMADVQALPIPDPEDELGYVMNAVRTIRRELKGEVPLIGFSGSPWTLATYMVEGGSSKAFTKIKQMMYAEPQTLHLLLDKLADSVIGYLNAQIKAGAQSVMVFDTWGGVLTPRDYRDFSLQYMHKIVDGLIRENEGRRVPVTLFTKNGGQWLEQIAATGCDALGLDWTIDIADAKRRVGDKVALQGNMDPSMLYAAPARIREEVATILAGFGSGNGHVFNLGHGIHQDVDPEHAGVFVNAVHELSAQYHGR</sequence>
<comment type="function">
    <text evidence="1">Catalyzes the decarboxylation of four acetate groups of uroporphyrinogen-III to yield coproporphyrinogen-III.</text>
</comment>
<comment type="catalytic activity">
    <reaction evidence="1">
        <text>uroporphyrinogen III + 4 H(+) = coproporphyrinogen III + 4 CO2</text>
        <dbReference type="Rhea" id="RHEA:19865"/>
        <dbReference type="ChEBI" id="CHEBI:15378"/>
        <dbReference type="ChEBI" id="CHEBI:16526"/>
        <dbReference type="ChEBI" id="CHEBI:57308"/>
        <dbReference type="ChEBI" id="CHEBI:57309"/>
        <dbReference type="EC" id="4.1.1.37"/>
    </reaction>
</comment>
<comment type="pathway">
    <text evidence="1">Porphyrin-containing compound metabolism; protoporphyrin-IX biosynthesis; coproporphyrinogen-III from 5-aminolevulinate: step 4/4.</text>
</comment>
<comment type="subunit">
    <text evidence="1">Homodimer.</text>
</comment>
<comment type="subcellular location">
    <subcellularLocation>
        <location evidence="1">Cytoplasm</location>
    </subcellularLocation>
</comment>
<comment type="similarity">
    <text evidence="1">Belongs to the uroporphyrinogen decarboxylase family.</text>
</comment>
<gene>
    <name evidence="1" type="primary">hemE</name>
    <name type="ordered locus">ASA_0769</name>
</gene>
<keyword id="KW-0963">Cytoplasm</keyword>
<keyword id="KW-0210">Decarboxylase</keyword>
<keyword id="KW-0456">Lyase</keyword>
<keyword id="KW-0627">Porphyrin biosynthesis</keyword>
<protein>
    <recommendedName>
        <fullName evidence="1">Uroporphyrinogen decarboxylase</fullName>
        <shortName evidence="1">UPD</shortName>
        <shortName evidence="1">URO-D</shortName>
        <ecNumber evidence="1">4.1.1.37</ecNumber>
    </recommendedName>
</protein>
<feature type="chain" id="PRO_1000023868" description="Uroporphyrinogen decarboxylase">
    <location>
        <begin position="1"/>
        <end position="355"/>
    </location>
</feature>
<feature type="binding site" evidence="1">
    <location>
        <begin position="27"/>
        <end position="31"/>
    </location>
    <ligand>
        <name>substrate</name>
    </ligand>
</feature>
<feature type="binding site" evidence="1">
    <location>
        <position position="77"/>
    </location>
    <ligand>
        <name>substrate</name>
    </ligand>
</feature>
<feature type="binding site" evidence="1">
    <location>
        <position position="154"/>
    </location>
    <ligand>
        <name>substrate</name>
    </ligand>
</feature>
<feature type="binding site" evidence="1">
    <location>
        <position position="209"/>
    </location>
    <ligand>
        <name>substrate</name>
    </ligand>
</feature>
<feature type="binding site" evidence="1">
    <location>
        <position position="327"/>
    </location>
    <ligand>
        <name>substrate</name>
    </ligand>
</feature>
<feature type="site" description="Transition state stabilizer" evidence="1">
    <location>
        <position position="77"/>
    </location>
</feature>
<reference key="1">
    <citation type="journal article" date="2008" name="BMC Genomics">
        <title>The genome of Aeromonas salmonicida subsp. salmonicida A449: insights into the evolution of a fish pathogen.</title>
        <authorList>
            <person name="Reith M.E."/>
            <person name="Singh R.K."/>
            <person name="Curtis B."/>
            <person name="Boyd J.M."/>
            <person name="Bouevitch A."/>
            <person name="Kimball J."/>
            <person name="Munholland J."/>
            <person name="Murphy C."/>
            <person name="Sarty D."/>
            <person name="Williams J."/>
            <person name="Nash J.H."/>
            <person name="Johnson S.C."/>
            <person name="Brown L.L."/>
        </authorList>
    </citation>
    <scope>NUCLEOTIDE SEQUENCE [LARGE SCALE GENOMIC DNA]</scope>
    <source>
        <strain>A449</strain>
    </source>
</reference>
<evidence type="ECO:0000255" key="1">
    <source>
        <dbReference type="HAMAP-Rule" id="MF_00218"/>
    </source>
</evidence>
<proteinExistence type="inferred from homology"/>